<evidence type="ECO:0000255" key="1">
    <source>
        <dbReference type="HAMAP-Rule" id="MF_01300"/>
    </source>
</evidence>
<gene>
    <name evidence="1" type="primary">dctA</name>
    <name type="ordered locus">BMA10247_2815</name>
</gene>
<proteinExistence type="inferred from homology"/>
<name>DCTA_BURM7</name>
<accession>A3MQ00</accession>
<sequence>MKKPFYKVLYVQVIFAIVVGVILGHYYPSLAVDMKPLGDGFIKLIKMVIGPIIFCTVVTGIAGMQDMKKVGRVGGKALLYFEIVSTCALVLGLAATHILRPGVGFNIDPATLNGKEVASYAAKAHGQSSVDFLMHIIPNTMIDAFAQGEILQILLIALLFGSVLAHLGERGRVVTDFIDGITRVLFGIVHIVTKLAPIGAFGAMAFTIGKYGVGSLVPLLKLIGTFYLTSVVFVLVVLGAIARFTGFSIIRFVGYIKEELLIVLGTSSSEAALPQLMEKLEKAGCSRSVVGLVVPTGYLFNLDGTNIYMTMAVLFIAQATNIELTWMQQLTLLAVAMLTSKGASGVTGAGFITLAATLAVVPTIPLSGMVLILGIDRFMSECRALTNIVGNGVATVVVSAWEKELDRAKLRAALSGNGEAAAGEAARV</sequence>
<reference key="1">
    <citation type="journal article" date="2010" name="Genome Biol. Evol.">
        <title>Continuing evolution of Burkholderia mallei through genome reduction and large-scale rearrangements.</title>
        <authorList>
            <person name="Losada L."/>
            <person name="Ronning C.M."/>
            <person name="DeShazer D."/>
            <person name="Woods D."/>
            <person name="Fedorova N."/>
            <person name="Kim H.S."/>
            <person name="Shabalina S.A."/>
            <person name="Pearson T.R."/>
            <person name="Brinkac L."/>
            <person name="Tan P."/>
            <person name="Nandi T."/>
            <person name="Crabtree J."/>
            <person name="Badger J."/>
            <person name="Beckstrom-Sternberg S."/>
            <person name="Saqib M."/>
            <person name="Schutzer S.E."/>
            <person name="Keim P."/>
            <person name="Nierman W.C."/>
        </authorList>
    </citation>
    <scope>NUCLEOTIDE SEQUENCE [LARGE SCALE GENOMIC DNA]</scope>
    <source>
        <strain>NCTC 10247</strain>
    </source>
</reference>
<protein>
    <recommendedName>
        <fullName evidence="1">C4-dicarboxylate transport protein</fullName>
    </recommendedName>
</protein>
<organism>
    <name type="scientific">Burkholderia mallei (strain NCTC 10247)</name>
    <dbReference type="NCBI Taxonomy" id="320389"/>
    <lineage>
        <taxon>Bacteria</taxon>
        <taxon>Pseudomonadati</taxon>
        <taxon>Pseudomonadota</taxon>
        <taxon>Betaproteobacteria</taxon>
        <taxon>Burkholderiales</taxon>
        <taxon>Burkholderiaceae</taxon>
        <taxon>Burkholderia</taxon>
        <taxon>pseudomallei group</taxon>
    </lineage>
</organism>
<keyword id="KW-0997">Cell inner membrane</keyword>
<keyword id="KW-1003">Cell membrane</keyword>
<keyword id="KW-0472">Membrane</keyword>
<keyword id="KW-0769">Symport</keyword>
<keyword id="KW-0812">Transmembrane</keyword>
<keyword id="KW-1133">Transmembrane helix</keyword>
<keyword id="KW-0813">Transport</keyword>
<comment type="function">
    <text evidence="1">Responsible for the transport of dicarboxylates such as succinate, fumarate, and malate from the periplasm across the membrane.</text>
</comment>
<comment type="subcellular location">
    <subcellularLocation>
        <location evidence="1">Cell inner membrane</location>
        <topology evidence="1">Multi-pass membrane protein</topology>
    </subcellularLocation>
</comment>
<comment type="similarity">
    <text evidence="1">Belongs to the dicarboxylate/amino acid:cation symporter (DAACS) (TC 2.A.23) family.</text>
</comment>
<dbReference type="EMBL" id="CP000548">
    <property type="protein sequence ID" value="ABO07373.1"/>
    <property type="molecule type" value="Genomic_DNA"/>
</dbReference>
<dbReference type="RefSeq" id="WP_004198288.1">
    <property type="nucleotide sequence ID" value="NZ_CP007802.1"/>
</dbReference>
<dbReference type="SMR" id="A3MQ00"/>
<dbReference type="KEGG" id="bmaz:BM44_519"/>
<dbReference type="KEGG" id="bmn:BMA10247_2815"/>
<dbReference type="PATRIC" id="fig|320389.8.peg.571"/>
<dbReference type="GO" id="GO:0005886">
    <property type="term" value="C:plasma membrane"/>
    <property type="evidence" value="ECO:0007669"/>
    <property type="project" value="UniProtKB-SubCell"/>
</dbReference>
<dbReference type="GO" id="GO:0015138">
    <property type="term" value="F:fumarate transmembrane transporter activity"/>
    <property type="evidence" value="ECO:0007669"/>
    <property type="project" value="TreeGrafter"/>
</dbReference>
<dbReference type="GO" id="GO:0015366">
    <property type="term" value="F:malate:proton symporter activity"/>
    <property type="evidence" value="ECO:0007669"/>
    <property type="project" value="TreeGrafter"/>
</dbReference>
<dbReference type="GO" id="GO:0015141">
    <property type="term" value="F:succinate transmembrane transporter activity"/>
    <property type="evidence" value="ECO:0007669"/>
    <property type="project" value="TreeGrafter"/>
</dbReference>
<dbReference type="GO" id="GO:0070778">
    <property type="term" value="P:L-aspartate transmembrane transport"/>
    <property type="evidence" value="ECO:0007669"/>
    <property type="project" value="TreeGrafter"/>
</dbReference>
<dbReference type="FunFam" id="1.10.3860.10:FF:000001">
    <property type="entry name" value="C4-dicarboxylate transport protein"/>
    <property type="match status" value="1"/>
</dbReference>
<dbReference type="Gene3D" id="1.10.3860.10">
    <property type="entry name" value="Sodium:dicarboxylate symporter"/>
    <property type="match status" value="1"/>
</dbReference>
<dbReference type="HAMAP" id="MF_01300">
    <property type="entry name" value="C4_dicarb_transport"/>
    <property type="match status" value="1"/>
</dbReference>
<dbReference type="InterPro" id="IPR023954">
    <property type="entry name" value="C4_dicarb_transport"/>
</dbReference>
<dbReference type="InterPro" id="IPR001991">
    <property type="entry name" value="Na-dicarboxylate_symporter"/>
</dbReference>
<dbReference type="InterPro" id="IPR018107">
    <property type="entry name" value="Na-dicarboxylate_symporter_CS"/>
</dbReference>
<dbReference type="InterPro" id="IPR036458">
    <property type="entry name" value="Na:dicarbo_symporter_sf"/>
</dbReference>
<dbReference type="NCBIfam" id="NF002461">
    <property type="entry name" value="PRK01663.1"/>
    <property type="match status" value="1"/>
</dbReference>
<dbReference type="NCBIfam" id="NF009587">
    <property type="entry name" value="PRK13027.1"/>
    <property type="match status" value="1"/>
</dbReference>
<dbReference type="PANTHER" id="PTHR42865:SF1">
    <property type="entry name" value="AEROBIC C4-DICARBOXYLATE TRANSPORT PROTEIN"/>
    <property type="match status" value="1"/>
</dbReference>
<dbReference type="PANTHER" id="PTHR42865">
    <property type="entry name" value="PROTON/GLUTAMATE-ASPARTATE SYMPORTER"/>
    <property type="match status" value="1"/>
</dbReference>
<dbReference type="Pfam" id="PF00375">
    <property type="entry name" value="SDF"/>
    <property type="match status" value="1"/>
</dbReference>
<dbReference type="PRINTS" id="PR00173">
    <property type="entry name" value="EDTRNSPORT"/>
</dbReference>
<dbReference type="SUPFAM" id="SSF118215">
    <property type="entry name" value="Proton glutamate symport protein"/>
    <property type="match status" value="1"/>
</dbReference>
<dbReference type="PROSITE" id="PS00713">
    <property type="entry name" value="NA_DICARBOXYL_SYMP_1"/>
    <property type="match status" value="1"/>
</dbReference>
<feature type="chain" id="PRO_1000067434" description="C4-dicarboxylate transport protein">
    <location>
        <begin position="1"/>
        <end position="428"/>
    </location>
</feature>
<feature type="transmembrane region" description="Helical" evidence="1">
    <location>
        <begin position="8"/>
        <end position="28"/>
    </location>
</feature>
<feature type="transmembrane region" description="Helical" evidence="1">
    <location>
        <begin position="44"/>
        <end position="64"/>
    </location>
</feature>
<feature type="transmembrane region" description="Helical" evidence="1">
    <location>
        <begin position="78"/>
        <end position="98"/>
    </location>
</feature>
<feature type="transmembrane region" description="Helical" evidence="1">
    <location>
        <begin position="148"/>
        <end position="168"/>
    </location>
</feature>
<feature type="transmembrane region" description="Helical" evidence="1">
    <location>
        <begin position="184"/>
        <end position="204"/>
    </location>
</feature>
<feature type="transmembrane region" description="Helical" evidence="1">
    <location>
        <begin position="222"/>
        <end position="242"/>
    </location>
</feature>
<feature type="transmembrane region" description="Helical" evidence="1">
    <location>
        <begin position="307"/>
        <end position="327"/>
    </location>
</feature>
<feature type="transmembrane region" description="Helical" evidence="1">
    <location>
        <begin position="355"/>
        <end position="375"/>
    </location>
</feature>